<gene>
    <name evidence="1" type="primary">coaE</name>
    <name type="ordered locus">Tbd_2367</name>
</gene>
<name>COAE_THIDA</name>
<proteinExistence type="inferred from homology"/>
<protein>
    <recommendedName>
        <fullName evidence="1">Dephospho-CoA kinase</fullName>
        <ecNumber evidence="1">2.7.1.24</ecNumber>
    </recommendedName>
    <alternativeName>
        <fullName evidence="1">Dephosphocoenzyme A kinase</fullName>
    </alternativeName>
</protein>
<dbReference type="EC" id="2.7.1.24" evidence="1"/>
<dbReference type="EMBL" id="CP000116">
    <property type="protein sequence ID" value="AAZ98320.1"/>
    <property type="molecule type" value="Genomic_DNA"/>
</dbReference>
<dbReference type="RefSeq" id="WP_011312879.1">
    <property type="nucleotide sequence ID" value="NC_007404.1"/>
</dbReference>
<dbReference type="SMR" id="Q3SGD0"/>
<dbReference type="STRING" id="292415.Tbd_2367"/>
<dbReference type="KEGG" id="tbd:Tbd_2367"/>
<dbReference type="eggNOG" id="COG0237">
    <property type="taxonomic scope" value="Bacteria"/>
</dbReference>
<dbReference type="HOGENOM" id="CLU_057180_1_2_4"/>
<dbReference type="OrthoDB" id="9812943at2"/>
<dbReference type="UniPathway" id="UPA00241">
    <property type="reaction ID" value="UER00356"/>
</dbReference>
<dbReference type="Proteomes" id="UP000008291">
    <property type="component" value="Chromosome"/>
</dbReference>
<dbReference type="GO" id="GO:0005737">
    <property type="term" value="C:cytoplasm"/>
    <property type="evidence" value="ECO:0007669"/>
    <property type="project" value="UniProtKB-SubCell"/>
</dbReference>
<dbReference type="GO" id="GO:0005524">
    <property type="term" value="F:ATP binding"/>
    <property type="evidence" value="ECO:0007669"/>
    <property type="project" value="UniProtKB-UniRule"/>
</dbReference>
<dbReference type="GO" id="GO:0004140">
    <property type="term" value="F:dephospho-CoA kinase activity"/>
    <property type="evidence" value="ECO:0007669"/>
    <property type="project" value="UniProtKB-UniRule"/>
</dbReference>
<dbReference type="GO" id="GO:0015937">
    <property type="term" value="P:coenzyme A biosynthetic process"/>
    <property type="evidence" value="ECO:0007669"/>
    <property type="project" value="UniProtKB-UniRule"/>
</dbReference>
<dbReference type="CDD" id="cd02022">
    <property type="entry name" value="DPCK"/>
    <property type="match status" value="1"/>
</dbReference>
<dbReference type="Gene3D" id="3.40.50.300">
    <property type="entry name" value="P-loop containing nucleotide triphosphate hydrolases"/>
    <property type="match status" value="1"/>
</dbReference>
<dbReference type="HAMAP" id="MF_00376">
    <property type="entry name" value="Dephospho_CoA_kinase"/>
    <property type="match status" value="1"/>
</dbReference>
<dbReference type="InterPro" id="IPR001977">
    <property type="entry name" value="Depp_CoAkinase"/>
</dbReference>
<dbReference type="InterPro" id="IPR027417">
    <property type="entry name" value="P-loop_NTPase"/>
</dbReference>
<dbReference type="NCBIfam" id="TIGR00152">
    <property type="entry name" value="dephospho-CoA kinase"/>
    <property type="match status" value="1"/>
</dbReference>
<dbReference type="PANTHER" id="PTHR10695:SF46">
    <property type="entry name" value="BIFUNCTIONAL COENZYME A SYNTHASE-RELATED"/>
    <property type="match status" value="1"/>
</dbReference>
<dbReference type="PANTHER" id="PTHR10695">
    <property type="entry name" value="DEPHOSPHO-COA KINASE-RELATED"/>
    <property type="match status" value="1"/>
</dbReference>
<dbReference type="Pfam" id="PF01121">
    <property type="entry name" value="CoaE"/>
    <property type="match status" value="1"/>
</dbReference>
<dbReference type="SUPFAM" id="SSF52540">
    <property type="entry name" value="P-loop containing nucleoside triphosphate hydrolases"/>
    <property type="match status" value="1"/>
</dbReference>
<dbReference type="PROSITE" id="PS51219">
    <property type="entry name" value="DPCK"/>
    <property type="match status" value="1"/>
</dbReference>
<reference key="1">
    <citation type="journal article" date="2006" name="J. Bacteriol.">
        <title>The genome sequence of the obligately chemolithoautotrophic, facultatively anaerobic bacterium Thiobacillus denitrificans.</title>
        <authorList>
            <person name="Beller H.R."/>
            <person name="Chain P.S."/>
            <person name="Letain T.E."/>
            <person name="Chakicherla A."/>
            <person name="Larimer F.W."/>
            <person name="Richardson P.M."/>
            <person name="Coleman M.A."/>
            <person name="Wood A.P."/>
            <person name="Kelly D.P."/>
        </authorList>
    </citation>
    <scope>NUCLEOTIDE SEQUENCE [LARGE SCALE GENOMIC DNA]</scope>
    <source>
        <strain>ATCC 25259 / T1</strain>
    </source>
</reference>
<feature type="chain" id="PRO_0000243359" description="Dephospho-CoA kinase">
    <location>
        <begin position="1"/>
        <end position="202"/>
    </location>
</feature>
<feature type="domain" description="DPCK" evidence="1">
    <location>
        <begin position="3"/>
        <end position="200"/>
    </location>
</feature>
<feature type="binding site" evidence="1">
    <location>
        <begin position="11"/>
        <end position="16"/>
    </location>
    <ligand>
        <name>ATP</name>
        <dbReference type="ChEBI" id="CHEBI:30616"/>
    </ligand>
</feature>
<keyword id="KW-0067">ATP-binding</keyword>
<keyword id="KW-0173">Coenzyme A biosynthesis</keyword>
<keyword id="KW-0963">Cytoplasm</keyword>
<keyword id="KW-0418">Kinase</keyword>
<keyword id="KW-0547">Nucleotide-binding</keyword>
<keyword id="KW-1185">Reference proteome</keyword>
<keyword id="KW-0808">Transferase</keyword>
<accession>Q3SGD0</accession>
<organism>
    <name type="scientific">Thiobacillus denitrificans (strain ATCC 25259 / T1)</name>
    <dbReference type="NCBI Taxonomy" id="292415"/>
    <lineage>
        <taxon>Bacteria</taxon>
        <taxon>Pseudomonadati</taxon>
        <taxon>Pseudomonadota</taxon>
        <taxon>Betaproteobacteria</taxon>
        <taxon>Nitrosomonadales</taxon>
        <taxon>Thiobacillaceae</taxon>
        <taxon>Thiobacillus</taxon>
    </lineage>
</organism>
<comment type="function">
    <text evidence="1">Catalyzes the phosphorylation of the 3'-hydroxyl group of dephosphocoenzyme A to form coenzyme A.</text>
</comment>
<comment type="catalytic activity">
    <reaction evidence="1">
        <text>3'-dephospho-CoA + ATP = ADP + CoA + H(+)</text>
        <dbReference type="Rhea" id="RHEA:18245"/>
        <dbReference type="ChEBI" id="CHEBI:15378"/>
        <dbReference type="ChEBI" id="CHEBI:30616"/>
        <dbReference type="ChEBI" id="CHEBI:57287"/>
        <dbReference type="ChEBI" id="CHEBI:57328"/>
        <dbReference type="ChEBI" id="CHEBI:456216"/>
        <dbReference type="EC" id="2.7.1.24"/>
    </reaction>
</comment>
<comment type="pathway">
    <text evidence="1">Cofactor biosynthesis; coenzyme A biosynthesis; CoA from (R)-pantothenate: step 5/5.</text>
</comment>
<comment type="subcellular location">
    <subcellularLocation>
        <location evidence="1">Cytoplasm</location>
    </subcellularLocation>
</comment>
<comment type="similarity">
    <text evidence="1">Belongs to the CoaE family.</text>
</comment>
<sequence length="202" mass="21303">MFTIGLTGGIGSGKSAAAERFAELGVPVIDTDVIAHELTRPGSRALDVIRASFGEAVIAADGSLDRPVLRRRVFVDPAARRQLEAILHPLILHEVKARLASLSGPYAVAVIPLLVETGAYDAPVDRIAVVDCPEELQIARTIARSGLTPDEVGAILAAQAARPARLAVADDVIVNTGSLAALRDQVDALHQRYLTLAANRLP</sequence>
<evidence type="ECO:0000255" key="1">
    <source>
        <dbReference type="HAMAP-Rule" id="MF_00376"/>
    </source>
</evidence>